<proteinExistence type="inferred from homology"/>
<organism>
    <name type="scientific">Bordetella bronchiseptica (strain ATCC BAA-588 / NCTC 13252 / RB50)</name>
    <name type="common">Alcaligenes bronchisepticus</name>
    <dbReference type="NCBI Taxonomy" id="257310"/>
    <lineage>
        <taxon>Bacteria</taxon>
        <taxon>Pseudomonadati</taxon>
        <taxon>Pseudomonadota</taxon>
        <taxon>Betaproteobacteria</taxon>
        <taxon>Burkholderiales</taxon>
        <taxon>Alcaligenaceae</taxon>
        <taxon>Bordetella</taxon>
    </lineage>
</organism>
<keyword id="KW-0413">Isomerase</keyword>
<keyword id="KW-0819">tRNA processing</keyword>
<accession>P65853</accession>
<accession>P59875</accession>
<sequence length="244" mass="26181">MAKRRGLALDGVLLLDKPVGLSSNHALQRAKRTVDAAKAGHTGTLDPFATGLLVCCMGRATKISGRMLEADKTYQATLQFGEETDSGDLTGHIVARAPDGFAGVEEAALRDVLSRFVGTIEQIPPMYSALKRDGKPLYEYARAGIELDRPPRQVTIRHIELLSFSGMQAQIDVACSKGTYIRTLAQDIGRALGCHAHLAALRRTHVGPFSLDRAVTLEALQAMPDAKQALLAMNELPAGLLPAT</sequence>
<evidence type="ECO:0000255" key="1">
    <source>
        <dbReference type="HAMAP-Rule" id="MF_01080"/>
    </source>
</evidence>
<feature type="chain" id="PRO_0000121802" description="tRNA pseudouridine synthase B">
    <location>
        <begin position="1"/>
        <end position="244"/>
    </location>
</feature>
<feature type="active site" description="Nucleophile" evidence="1">
    <location>
        <position position="46"/>
    </location>
</feature>
<name>TRUB_BORBR</name>
<comment type="function">
    <text evidence="1">Responsible for synthesis of pseudouridine from uracil-55 in the psi GC loop of transfer RNAs.</text>
</comment>
<comment type="catalytic activity">
    <reaction evidence="1">
        <text>uridine(55) in tRNA = pseudouridine(55) in tRNA</text>
        <dbReference type="Rhea" id="RHEA:42532"/>
        <dbReference type="Rhea" id="RHEA-COMP:10101"/>
        <dbReference type="Rhea" id="RHEA-COMP:10102"/>
        <dbReference type="ChEBI" id="CHEBI:65314"/>
        <dbReference type="ChEBI" id="CHEBI:65315"/>
        <dbReference type="EC" id="5.4.99.25"/>
    </reaction>
</comment>
<comment type="similarity">
    <text evidence="1">Belongs to the pseudouridine synthase TruB family. Type 1 subfamily.</text>
</comment>
<gene>
    <name evidence="1" type="primary">truB</name>
    <name type="ordered locus">BB3244</name>
</gene>
<dbReference type="EC" id="5.4.99.25" evidence="1"/>
<dbReference type="EMBL" id="BX640446">
    <property type="protein sequence ID" value="CAE33736.1"/>
    <property type="molecule type" value="Genomic_DNA"/>
</dbReference>
<dbReference type="RefSeq" id="WP_003810552.1">
    <property type="nucleotide sequence ID" value="NC_002927.3"/>
</dbReference>
<dbReference type="SMR" id="P65853"/>
<dbReference type="GeneID" id="69601166"/>
<dbReference type="KEGG" id="bbr:BB3244"/>
<dbReference type="eggNOG" id="COG0130">
    <property type="taxonomic scope" value="Bacteria"/>
</dbReference>
<dbReference type="HOGENOM" id="CLU_032087_2_0_4"/>
<dbReference type="Proteomes" id="UP000001027">
    <property type="component" value="Chromosome"/>
</dbReference>
<dbReference type="GO" id="GO:0003723">
    <property type="term" value="F:RNA binding"/>
    <property type="evidence" value="ECO:0007669"/>
    <property type="project" value="InterPro"/>
</dbReference>
<dbReference type="GO" id="GO:0160148">
    <property type="term" value="F:tRNA pseudouridine(55) synthase activity"/>
    <property type="evidence" value="ECO:0007669"/>
    <property type="project" value="UniProtKB-EC"/>
</dbReference>
<dbReference type="GO" id="GO:1990481">
    <property type="term" value="P:mRNA pseudouridine synthesis"/>
    <property type="evidence" value="ECO:0007669"/>
    <property type="project" value="TreeGrafter"/>
</dbReference>
<dbReference type="GO" id="GO:0031119">
    <property type="term" value="P:tRNA pseudouridine synthesis"/>
    <property type="evidence" value="ECO:0007669"/>
    <property type="project" value="UniProtKB-UniRule"/>
</dbReference>
<dbReference type="CDD" id="cd02573">
    <property type="entry name" value="PseudoU_synth_EcTruB"/>
    <property type="match status" value="1"/>
</dbReference>
<dbReference type="Gene3D" id="3.30.2350.10">
    <property type="entry name" value="Pseudouridine synthase"/>
    <property type="match status" value="1"/>
</dbReference>
<dbReference type="HAMAP" id="MF_01080">
    <property type="entry name" value="TruB_bact"/>
    <property type="match status" value="1"/>
</dbReference>
<dbReference type="InterPro" id="IPR020103">
    <property type="entry name" value="PsdUridine_synth_cat_dom_sf"/>
</dbReference>
<dbReference type="InterPro" id="IPR002501">
    <property type="entry name" value="PsdUridine_synth_N"/>
</dbReference>
<dbReference type="InterPro" id="IPR014780">
    <property type="entry name" value="tRNA_psdUridine_synth_TruB"/>
</dbReference>
<dbReference type="InterPro" id="IPR032819">
    <property type="entry name" value="TruB_C"/>
</dbReference>
<dbReference type="NCBIfam" id="TIGR00431">
    <property type="entry name" value="TruB"/>
    <property type="match status" value="1"/>
</dbReference>
<dbReference type="PANTHER" id="PTHR13767:SF2">
    <property type="entry name" value="PSEUDOURIDYLATE SYNTHASE TRUB1"/>
    <property type="match status" value="1"/>
</dbReference>
<dbReference type="PANTHER" id="PTHR13767">
    <property type="entry name" value="TRNA-PSEUDOURIDINE SYNTHASE"/>
    <property type="match status" value="1"/>
</dbReference>
<dbReference type="Pfam" id="PF16198">
    <property type="entry name" value="TruB_C_2"/>
    <property type="match status" value="1"/>
</dbReference>
<dbReference type="Pfam" id="PF01509">
    <property type="entry name" value="TruB_N"/>
    <property type="match status" value="1"/>
</dbReference>
<dbReference type="SUPFAM" id="SSF55120">
    <property type="entry name" value="Pseudouridine synthase"/>
    <property type="match status" value="1"/>
</dbReference>
<reference key="1">
    <citation type="journal article" date="2003" name="Nat. Genet.">
        <title>Comparative analysis of the genome sequences of Bordetella pertussis, Bordetella parapertussis and Bordetella bronchiseptica.</title>
        <authorList>
            <person name="Parkhill J."/>
            <person name="Sebaihia M."/>
            <person name="Preston A."/>
            <person name="Murphy L.D."/>
            <person name="Thomson N.R."/>
            <person name="Harris D.E."/>
            <person name="Holden M.T.G."/>
            <person name="Churcher C.M."/>
            <person name="Bentley S.D."/>
            <person name="Mungall K.L."/>
            <person name="Cerdeno-Tarraga A.-M."/>
            <person name="Temple L."/>
            <person name="James K.D."/>
            <person name="Harris B."/>
            <person name="Quail M.A."/>
            <person name="Achtman M."/>
            <person name="Atkin R."/>
            <person name="Baker S."/>
            <person name="Basham D."/>
            <person name="Bason N."/>
            <person name="Cherevach I."/>
            <person name="Chillingworth T."/>
            <person name="Collins M."/>
            <person name="Cronin A."/>
            <person name="Davis P."/>
            <person name="Doggett J."/>
            <person name="Feltwell T."/>
            <person name="Goble A."/>
            <person name="Hamlin N."/>
            <person name="Hauser H."/>
            <person name="Holroyd S."/>
            <person name="Jagels K."/>
            <person name="Leather S."/>
            <person name="Moule S."/>
            <person name="Norberczak H."/>
            <person name="O'Neil S."/>
            <person name="Ormond D."/>
            <person name="Price C."/>
            <person name="Rabbinowitsch E."/>
            <person name="Rutter S."/>
            <person name="Sanders M."/>
            <person name="Saunders D."/>
            <person name="Seeger K."/>
            <person name="Sharp S."/>
            <person name="Simmonds M."/>
            <person name="Skelton J."/>
            <person name="Squares R."/>
            <person name="Squares S."/>
            <person name="Stevens K."/>
            <person name="Unwin L."/>
            <person name="Whitehead S."/>
            <person name="Barrell B.G."/>
            <person name="Maskell D.J."/>
        </authorList>
    </citation>
    <scope>NUCLEOTIDE SEQUENCE [LARGE SCALE GENOMIC DNA]</scope>
    <source>
        <strain>ATCC BAA-588 / NCTC 13252 / RB50</strain>
    </source>
</reference>
<protein>
    <recommendedName>
        <fullName evidence="1">tRNA pseudouridine synthase B</fullName>
        <ecNumber evidence="1">5.4.99.25</ecNumber>
    </recommendedName>
    <alternativeName>
        <fullName evidence="1">tRNA pseudouridine(55) synthase</fullName>
        <shortName evidence="1">Psi55 synthase</shortName>
    </alternativeName>
    <alternativeName>
        <fullName evidence="1">tRNA pseudouridylate synthase</fullName>
    </alternativeName>
    <alternativeName>
        <fullName evidence="1">tRNA-uridine isomerase</fullName>
    </alternativeName>
</protein>